<feature type="chain" id="PRO_0000095729" description="Translation initiation factor IF-1">
    <location>
        <begin position="1"/>
        <end position="72"/>
    </location>
</feature>
<feature type="domain" description="S1-like" evidence="1">
    <location>
        <begin position="1"/>
        <end position="72"/>
    </location>
</feature>
<feature type="modified residue" description="Phosphotyrosine" evidence="1">
    <location>
        <position position="60"/>
    </location>
</feature>
<gene>
    <name evidence="1" type="primary">infA</name>
    <name type="ordered locus">BCE_0133</name>
</gene>
<protein>
    <recommendedName>
        <fullName evidence="1">Translation initiation factor IF-1</fullName>
    </recommendedName>
</protein>
<evidence type="ECO:0000255" key="1">
    <source>
        <dbReference type="HAMAP-Rule" id="MF_00075"/>
    </source>
</evidence>
<proteinExistence type="inferred from homology"/>
<accession>P61684</accession>
<dbReference type="EMBL" id="AE017194">
    <property type="protein sequence ID" value="AAS39069.1"/>
    <property type="molecule type" value="Genomic_DNA"/>
</dbReference>
<dbReference type="SMR" id="P61684"/>
<dbReference type="KEGG" id="bca:BCE_0133"/>
<dbReference type="HOGENOM" id="CLU_151267_1_0_9"/>
<dbReference type="Proteomes" id="UP000002527">
    <property type="component" value="Chromosome"/>
</dbReference>
<dbReference type="GO" id="GO:0005829">
    <property type="term" value="C:cytosol"/>
    <property type="evidence" value="ECO:0007669"/>
    <property type="project" value="TreeGrafter"/>
</dbReference>
<dbReference type="GO" id="GO:0043022">
    <property type="term" value="F:ribosome binding"/>
    <property type="evidence" value="ECO:0007669"/>
    <property type="project" value="UniProtKB-UniRule"/>
</dbReference>
<dbReference type="GO" id="GO:0019843">
    <property type="term" value="F:rRNA binding"/>
    <property type="evidence" value="ECO:0007669"/>
    <property type="project" value="UniProtKB-UniRule"/>
</dbReference>
<dbReference type="GO" id="GO:0003743">
    <property type="term" value="F:translation initiation factor activity"/>
    <property type="evidence" value="ECO:0007669"/>
    <property type="project" value="UniProtKB-UniRule"/>
</dbReference>
<dbReference type="CDD" id="cd04451">
    <property type="entry name" value="S1_IF1"/>
    <property type="match status" value="1"/>
</dbReference>
<dbReference type="FunFam" id="2.40.50.140:FF:000002">
    <property type="entry name" value="Translation initiation factor IF-1"/>
    <property type="match status" value="1"/>
</dbReference>
<dbReference type="Gene3D" id="2.40.50.140">
    <property type="entry name" value="Nucleic acid-binding proteins"/>
    <property type="match status" value="1"/>
</dbReference>
<dbReference type="HAMAP" id="MF_00075">
    <property type="entry name" value="IF_1"/>
    <property type="match status" value="1"/>
</dbReference>
<dbReference type="InterPro" id="IPR012340">
    <property type="entry name" value="NA-bd_OB-fold"/>
</dbReference>
<dbReference type="InterPro" id="IPR006196">
    <property type="entry name" value="RNA-binding_domain_S1_IF1"/>
</dbReference>
<dbReference type="InterPro" id="IPR003029">
    <property type="entry name" value="S1_domain"/>
</dbReference>
<dbReference type="InterPro" id="IPR004368">
    <property type="entry name" value="TIF_IF1"/>
</dbReference>
<dbReference type="NCBIfam" id="TIGR00008">
    <property type="entry name" value="infA"/>
    <property type="match status" value="1"/>
</dbReference>
<dbReference type="PANTHER" id="PTHR33370">
    <property type="entry name" value="TRANSLATION INITIATION FACTOR IF-1, CHLOROPLASTIC"/>
    <property type="match status" value="1"/>
</dbReference>
<dbReference type="PANTHER" id="PTHR33370:SF1">
    <property type="entry name" value="TRANSLATION INITIATION FACTOR IF-1, CHLOROPLASTIC"/>
    <property type="match status" value="1"/>
</dbReference>
<dbReference type="Pfam" id="PF01176">
    <property type="entry name" value="eIF-1a"/>
    <property type="match status" value="1"/>
</dbReference>
<dbReference type="SMART" id="SM00316">
    <property type="entry name" value="S1"/>
    <property type="match status" value="1"/>
</dbReference>
<dbReference type="SUPFAM" id="SSF50249">
    <property type="entry name" value="Nucleic acid-binding proteins"/>
    <property type="match status" value="1"/>
</dbReference>
<dbReference type="PROSITE" id="PS50832">
    <property type="entry name" value="S1_IF1_TYPE"/>
    <property type="match status" value="1"/>
</dbReference>
<organism>
    <name type="scientific">Bacillus cereus (strain ATCC 10987 / NRS 248)</name>
    <dbReference type="NCBI Taxonomy" id="222523"/>
    <lineage>
        <taxon>Bacteria</taxon>
        <taxon>Bacillati</taxon>
        <taxon>Bacillota</taxon>
        <taxon>Bacilli</taxon>
        <taxon>Bacillales</taxon>
        <taxon>Bacillaceae</taxon>
        <taxon>Bacillus</taxon>
        <taxon>Bacillus cereus group</taxon>
    </lineage>
</organism>
<sequence>MAKDDVIEVEGTVLETLPNAMFKVELENGHVVLAHVSGKIRMNFIRILPGDKVTVELSPYDLNRGRITYRFK</sequence>
<keyword id="KW-0963">Cytoplasm</keyword>
<keyword id="KW-0396">Initiation factor</keyword>
<keyword id="KW-0597">Phosphoprotein</keyword>
<keyword id="KW-0648">Protein biosynthesis</keyword>
<keyword id="KW-0694">RNA-binding</keyword>
<keyword id="KW-0699">rRNA-binding</keyword>
<comment type="function">
    <text evidence="1">One of the essential components for the initiation of protein synthesis. Stabilizes the binding of IF-2 and IF-3 on the 30S subunit to which N-formylmethionyl-tRNA(fMet) subsequently binds. Helps modulate mRNA selection, yielding the 30S pre-initiation complex (PIC). Upon addition of the 50S ribosomal subunit IF-1, IF-2 and IF-3 are released leaving the mature 70S translation initiation complex.</text>
</comment>
<comment type="subunit">
    <text evidence="1">Component of the 30S ribosomal translation pre-initiation complex which assembles on the 30S ribosome in the order IF-2 and IF-3, IF-1 and N-formylmethionyl-tRNA(fMet); mRNA recruitment can occur at any time during PIC assembly.</text>
</comment>
<comment type="subcellular location">
    <subcellularLocation>
        <location evidence="1">Cytoplasm</location>
    </subcellularLocation>
</comment>
<comment type="similarity">
    <text evidence="1">Belongs to the IF-1 family.</text>
</comment>
<name>IF1_BACC1</name>
<reference key="1">
    <citation type="journal article" date="2004" name="Nucleic Acids Res.">
        <title>The genome sequence of Bacillus cereus ATCC 10987 reveals metabolic adaptations and a large plasmid related to Bacillus anthracis pXO1.</title>
        <authorList>
            <person name="Rasko D.A."/>
            <person name="Ravel J."/>
            <person name="Oekstad O.A."/>
            <person name="Helgason E."/>
            <person name="Cer R.Z."/>
            <person name="Jiang L."/>
            <person name="Shores K.A."/>
            <person name="Fouts D.E."/>
            <person name="Tourasse N.J."/>
            <person name="Angiuoli S.V."/>
            <person name="Kolonay J.F."/>
            <person name="Nelson W.C."/>
            <person name="Kolstoe A.-B."/>
            <person name="Fraser C.M."/>
            <person name="Read T.D."/>
        </authorList>
    </citation>
    <scope>NUCLEOTIDE SEQUENCE [LARGE SCALE GENOMIC DNA]</scope>
    <source>
        <strain>ATCC 10987 / NRS 248</strain>
    </source>
</reference>